<feature type="transit peptide" description="Mitochondrion" evidence="2">
    <location>
        <begin position="1"/>
        <end position="29"/>
    </location>
</feature>
<feature type="chain" id="PRO_0000014481" description="Translation initiation factor IF-2, mitochondrial">
    <location>
        <begin position="30"/>
        <end position="727"/>
    </location>
</feature>
<feature type="domain" description="tr-type G">
    <location>
        <begin position="178"/>
        <end position="346"/>
    </location>
</feature>
<feature type="region of interest" description="G1" evidence="1">
    <location>
        <begin position="187"/>
        <end position="194"/>
    </location>
</feature>
<feature type="region of interest" description="G2" evidence="1">
    <location>
        <begin position="212"/>
        <end position="216"/>
    </location>
</feature>
<feature type="region of interest" description="G3" evidence="1">
    <location>
        <begin position="234"/>
        <end position="237"/>
    </location>
</feature>
<feature type="region of interest" description="G4" evidence="1">
    <location>
        <begin position="288"/>
        <end position="291"/>
    </location>
</feature>
<feature type="region of interest" description="G5" evidence="1">
    <location>
        <begin position="324"/>
        <end position="326"/>
    </location>
</feature>
<feature type="binding site" evidence="1">
    <location>
        <begin position="187"/>
        <end position="194"/>
    </location>
    <ligand>
        <name>GTP</name>
        <dbReference type="ChEBI" id="CHEBI:37565"/>
    </ligand>
</feature>
<feature type="binding site" evidence="1">
    <location>
        <begin position="234"/>
        <end position="237"/>
    </location>
    <ligand>
        <name>GTP</name>
        <dbReference type="ChEBI" id="CHEBI:37565"/>
    </ligand>
</feature>
<feature type="binding site" evidence="1">
    <location>
        <begin position="288"/>
        <end position="291"/>
    </location>
    <ligand>
        <name>GTP</name>
        <dbReference type="ChEBI" id="CHEBI:37565"/>
    </ligand>
</feature>
<feature type="modified residue" description="Phosphothreonine" evidence="3">
    <location>
        <position position="688"/>
    </location>
</feature>
<feature type="sequence conflict" description="In Ref. 1; AAH16590." evidence="4" ref="1">
    <original>G</original>
    <variation>D</variation>
    <location>
        <position position="645"/>
    </location>
</feature>
<feature type="strand" evidence="5">
    <location>
        <begin position="622"/>
        <end position="636"/>
    </location>
</feature>
<feature type="strand" evidence="5">
    <location>
        <begin position="639"/>
        <end position="651"/>
    </location>
</feature>
<feature type="strand" evidence="5">
    <location>
        <begin position="659"/>
        <end position="663"/>
    </location>
</feature>
<feature type="strand" evidence="5">
    <location>
        <begin position="666"/>
        <end position="671"/>
    </location>
</feature>
<feature type="strand" evidence="5">
    <location>
        <begin position="674"/>
        <end position="681"/>
    </location>
</feature>
<feature type="strand" evidence="5">
    <location>
        <begin position="684"/>
        <end position="686"/>
    </location>
</feature>
<feature type="strand" evidence="5">
    <location>
        <begin position="691"/>
        <end position="695"/>
    </location>
</feature>
<feature type="strand" evidence="5">
    <location>
        <begin position="707"/>
        <end position="712"/>
    </location>
</feature>
<reference key="1">
    <citation type="journal article" date="2004" name="Genome Res.">
        <title>The status, quality, and expansion of the NIH full-length cDNA project: the Mammalian Gene Collection (MGC).</title>
        <authorList>
            <consortium name="The MGC Project Team"/>
        </authorList>
    </citation>
    <scope>NUCLEOTIDE SEQUENCE [LARGE SCALE MRNA]</scope>
</reference>
<reference key="2">
    <citation type="journal article" date="2005" name="Science">
        <title>The transcriptional landscape of the mammalian genome.</title>
        <authorList>
            <person name="Carninci P."/>
            <person name="Kasukawa T."/>
            <person name="Katayama S."/>
            <person name="Gough J."/>
            <person name="Frith M.C."/>
            <person name="Maeda N."/>
            <person name="Oyama R."/>
            <person name="Ravasi T."/>
            <person name="Lenhard B."/>
            <person name="Wells C."/>
            <person name="Kodzius R."/>
            <person name="Shimokawa K."/>
            <person name="Bajic V.B."/>
            <person name="Brenner S.E."/>
            <person name="Batalov S."/>
            <person name="Forrest A.R."/>
            <person name="Zavolan M."/>
            <person name="Davis M.J."/>
            <person name="Wilming L.G."/>
            <person name="Aidinis V."/>
            <person name="Allen J.E."/>
            <person name="Ambesi-Impiombato A."/>
            <person name="Apweiler R."/>
            <person name="Aturaliya R.N."/>
            <person name="Bailey T.L."/>
            <person name="Bansal M."/>
            <person name="Baxter L."/>
            <person name="Beisel K.W."/>
            <person name="Bersano T."/>
            <person name="Bono H."/>
            <person name="Chalk A.M."/>
            <person name="Chiu K.P."/>
            <person name="Choudhary V."/>
            <person name="Christoffels A."/>
            <person name="Clutterbuck D.R."/>
            <person name="Crowe M.L."/>
            <person name="Dalla E."/>
            <person name="Dalrymple B.P."/>
            <person name="de Bono B."/>
            <person name="Della Gatta G."/>
            <person name="di Bernardo D."/>
            <person name="Down T."/>
            <person name="Engstrom P."/>
            <person name="Fagiolini M."/>
            <person name="Faulkner G."/>
            <person name="Fletcher C.F."/>
            <person name="Fukushima T."/>
            <person name="Furuno M."/>
            <person name="Futaki S."/>
            <person name="Gariboldi M."/>
            <person name="Georgii-Hemming P."/>
            <person name="Gingeras T.R."/>
            <person name="Gojobori T."/>
            <person name="Green R.E."/>
            <person name="Gustincich S."/>
            <person name="Harbers M."/>
            <person name="Hayashi Y."/>
            <person name="Hensch T.K."/>
            <person name="Hirokawa N."/>
            <person name="Hill D."/>
            <person name="Huminiecki L."/>
            <person name="Iacono M."/>
            <person name="Ikeo K."/>
            <person name="Iwama A."/>
            <person name="Ishikawa T."/>
            <person name="Jakt M."/>
            <person name="Kanapin A."/>
            <person name="Katoh M."/>
            <person name="Kawasawa Y."/>
            <person name="Kelso J."/>
            <person name="Kitamura H."/>
            <person name="Kitano H."/>
            <person name="Kollias G."/>
            <person name="Krishnan S.P."/>
            <person name="Kruger A."/>
            <person name="Kummerfeld S.K."/>
            <person name="Kurochkin I.V."/>
            <person name="Lareau L.F."/>
            <person name="Lazarevic D."/>
            <person name="Lipovich L."/>
            <person name="Liu J."/>
            <person name="Liuni S."/>
            <person name="McWilliam S."/>
            <person name="Madan Babu M."/>
            <person name="Madera M."/>
            <person name="Marchionni L."/>
            <person name="Matsuda H."/>
            <person name="Matsuzawa S."/>
            <person name="Miki H."/>
            <person name="Mignone F."/>
            <person name="Miyake S."/>
            <person name="Morris K."/>
            <person name="Mottagui-Tabar S."/>
            <person name="Mulder N."/>
            <person name="Nakano N."/>
            <person name="Nakauchi H."/>
            <person name="Ng P."/>
            <person name="Nilsson R."/>
            <person name="Nishiguchi S."/>
            <person name="Nishikawa S."/>
            <person name="Nori F."/>
            <person name="Ohara O."/>
            <person name="Okazaki Y."/>
            <person name="Orlando V."/>
            <person name="Pang K.C."/>
            <person name="Pavan W.J."/>
            <person name="Pavesi G."/>
            <person name="Pesole G."/>
            <person name="Petrovsky N."/>
            <person name="Piazza S."/>
            <person name="Reed J."/>
            <person name="Reid J.F."/>
            <person name="Ring B.Z."/>
            <person name="Ringwald M."/>
            <person name="Rost B."/>
            <person name="Ruan Y."/>
            <person name="Salzberg S.L."/>
            <person name="Sandelin A."/>
            <person name="Schneider C."/>
            <person name="Schoenbach C."/>
            <person name="Sekiguchi K."/>
            <person name="Semple C.A."/>
            <person name="Seno S."/>
            <person name="Sessa L."/>
            <person name="Sheng Y."/>
            <person name="Shibata Y."/>
            <person name="Shimada H."/>
            <person name="Shimada K."/>
            <person name="Silva D."/>
            <person name="Sinclair B."/>
            <person name="Sperling S."/>
            <person name="Stupka E."/>
            <person name="Sugiura K."/>
            <person name="Sultana R."/>
            <person name="Takenaka Y."/>
            <person name="Taki K."/>
            <person name="Tammoja K."/>
            <person name="Tan S.L."/>
            <person name="Tang S."/>
            <person name="Taylor M.S."/>
            <person name="Tegner J."/>
            <person name="Teichmann S.A."/>
            <person name="Ueda H.R."/>
            <person name="van Nimwegen E."/>
            <person name="Verardo R."/>
            <person name="Wei C.L."/>
            <person name="Yagi K."/>
            <person name="Yamanishi H."/>
            <person name="Zabarovsky E."/>
            <person name="Zhu S."/>
            <person name="Zimmer A."/>
            <person name="Hide W."/>
            <person name="Bult C."/>
            <person name="Grimmond S.M."/>
            <person name="Teasdale R.D."/>
            <person name="Liu E.T."/>
            <person name="Brusic V."/>
            <person name="Quackenbush J."/>
            <person name="Wahlestedt C."/>
            <person name="Mattick J.S."/>
            <person name="Hume D.A."/>
            <person name="Kai C."/>
            <person name="Sasaki D."/>
            <person name="Tomaru Y."/>
            <person name="Fukuda S."/>
            <person name="Kanamori-Katayama M."/>
            <person name="Suzuki M."/>
            <person name="Aoki J."/>
            <person name="Arakawa T."/>
            <person name="Iida J."/>
            <person name="Imamura K."/>
            <person name="Itoh M."/>
            <person name="Kato T."/>
            <person name="Kawaji H."/>
            <person name="Kawagashira N."/>
            <person name="Kawashima T."/>
            <person name="Kojima M."/>
            <person name="Kondo S."/>
            <person name="Konno H."/>
            <person name="Nakano K."/>
            <person name="Ninomiya N."/>
            <person name="Nishio T."/>
            <person name="Okada M."/>
            <person name="Plessy C."/>
            <person name="Shibata K."/>
            <person name="Shiraki T."/>
            <person name="Suzuki S."/>
            <person name="Tagami M."/>
            <person name="Waki K."/>
            <person name="Watahiki A."/>
            <person name="Okamura-Oho Y."/>
            <person name="Suzuki H."/>
            <person name="Kawai J."/>
            <person name="Hayashizaki Y."/>
        </authorList>
    </citation>
    <scope>NUCLEOTIDE SEQUENCE [LARGE SCALE MRNA]</scope>
    <source>
        <strain>C57BL/6J</strain>
        <tissue>Heart</tissue>
        <tissue>Testis</tissue>
    </source>
</reference>
<reference key="3">
    <citation type="journal article" date="2009" name="PLoS Biol.">
        <title>Lineage-specific biology revealed by a finished genome assembly of the mouse.</title>
        <authorList>
            <person name="Church D.M."/>
            <person name="Goodstadt L."/>
            <person name="Hillier L.W."/>
            <person name="Zody M.C."/>
            <person name="Goldstein S."/>
            <person name="She X."/>
            <person name="Bult C.J."/>
            <person name="Agarwala R."/>
            <person name="Cherry J.L."/>
            <person name="DiCuccio M."/>
            <person name="Hlavina W."/>
            <person name="Kapustin Y."/>
            <person name="Meric P."/>
            <person name="Maglott D."/>
            <person name="Birtle Z."/>
            <person name="Marques A.C."/>
            <person name="Graves T."/>
            <person name="Zhou S."/>
            <person name="Teague B."/>
            <person name="Potamousis K."/>
            <person name="Churas C."/>
            <person name="Place M."/>
            <person name="Herschleb J."/>
            <person name="Runnheim R."/>
            <person name="Forrest D."/>
            <person name="Amos-Landgraf J."/>
            <person name="Schwartz D.C."/>
            <person name="Cheng Z."/>
            <person name="Lindblad-Toh K."/>
            <person name="Eichler E.E."/>
            <person name="Ponting C.P."/>
        </authorList>
    </citation>
    <scope>NUCLEOTIDE SEQUENCE [LARGE SCALE GENOMIC DNA]</scope>
    <source>
        <strain>C57BL/6J</strain>
    </source>
</reference>
<reference key="4">
    <citation type="journal article" date="2004" name="Rapid Commun. Mass Spectrom.">
        <title>Phosphoproteome analysis of mouse liver using immobilized metal affinity purification and linear ion trap mass spectrometry.</title>
        <authorList>
            <person name="Jin W.-H."/>
            <person name="Dai J."/>
            <person name="Zhou H."/>
            <person name="Xia Q.-C."/>
            <person name="Zou H.-F."/>
            <person name="Zeng R."/>
        </authorList>
    </citation>
    <scope>PHOSPHORYLATION AT THR-688</scope>
</reference>
<reference key="5">
    <citation type="journal article" date="2010" name="Cell">
        <title>A tissue-specific atlas of mouse protein phosphorylation and expression.</title>
        <authorList>
            <person name="Huttlin E.L."/>
            <person name="Jedrychowski M.P."/>
            <person name="Elias J.E."/>
            <person name="Goswami T."/>
            <person name="Rad R."/>
            <person name="Beausoleil S.A."/>
            <person name="Villen J."/>
            <person name="Haas W."/>
            <person name="Sowa M.E."/>
            <person name="Gygi S.P."/>
        </authorList>
    </citation>
    <scope>IDENTIFICATION BY MASS SPECTROMETRY [LARGE SCALE ANALYSIS]</scope>
    <source>
        <tissue>Brain</tissue>
        <tissue>Brown adipose tissue</tissue>
        <tissue>Heart</tissue>
        <tissue>Kidney</tissue>
        <tissue>Liver</tissue>
        <tissue>Spleen</tissue>
        <tissue>Testis</tissue>
    </source>
</reference>
<reference key="6">
    <citation type="submission" date="2005-11" db="PDB data bank">
        <title>Solution structure of C-terminal domain of mitochondrial translational initiation factor 2.</title>
        <authorList>
            <consortium name="RIKEN structural genomics initiative (RSGI)"/>
        </authorList>
    </citation>
    <scope>STRUCTURE BY NMR OF 621-727</scope>
</reference>
<protein>
    <recommendedName>
        <fullName>Translation initiation factor IF-2, mitochondrial</fullName>
        <shortName>IF-2(Mt)</shortName>
        <shortName>IF-2Mt</shortName>
        <shortName>IF2(mt)</shortName>
    </recommendedName>
</protein>
<sequence length="727" mass="81289">MNQKLLKLENLLRFHTICRQVHSPSQRRLLAWCRHGFAPASSVWRDLLGARSWQTDMLIGSALHQHRLLVTKKEKRPPRSQLSPVKTKKEVEVWVGMTVEDLASAMAKDIDCVYEALLNTAIDVDSLEANSHLDEVWIKEVIKKAGMKLKWSKLKQERIRENKDAVRRPGTDPALLKPRSPVVTVMGHVDHGKTTLLDKLRETQVAAMEVGGITQHIGAFLVSLPSGEKITFLDTPGHAAFSAMRARGAQVTDIVVLVVAADDGVMKQTVESIQHAKDAEVPIILAINKCDKTDADPEKVKKELLAYDVVCEEYGGDVQAVHVSALTGDNLMALAEATIALAEILELKADPTGPVEGTVIESFTDKGRGPVTTAIIQRGTLRKGSILVAGKSWAKVRLIFDENGKILNEAYPSMPVGIIGWRDLPSAGDEILEVESEPRAREVIEWRKSEQKEEKGKDDLKIMEEKRREHQEAHRKAREKYGSLHWKERSYIKFLERKQQRPLKPKEKVERQSNVLPIIIKGDVDGSVEAILNLLDTYDASHECELELVHFGLGDISENDVTFAETFDGVIYGFNVEAGSAIQQSAAQKGVKIKLHKIIYHLIEDLQEELSSRLPHTLEEYPIGEASILATFTVTEGKKKIPVAGCRVQKGQLERHKKFKLIRNGQVIWKGSLTSLKHHKDDISVIKTGMDCGLSLDEEKVEFKPGDQVICYEENKVPTKTSWDPGF</sequence>
<accession>Q91YJ5</accession>
<accession>Q5M6W6</accession>
<evidence type="ECO:0000250" key="1"/>
<evidence type="ECO:0000255" key="2"/>
<evidence type="ECO:0000269" key="3">
    <source>
    </source>
</evidence>
<evidence type="ECO:0000305" key="4"/>
<evidence type="ECO:0007829" key="5">
    <source>
        <dbReference type="PDB" id="2CRV"/>
    </source>
</evidence>
<organism>
    <name type="scientific">Mus musculus</name>
    <name type="common">Mouse</name>
    <dbReference type="NCBI Taxonomy" id="10090"/>
    <lineage>
        <taxon>Eukaryota</taxon>
        <taxon>Metazoa</taxon>
        <taxon>Chordata</taxon>
        <taxon>Craniata</taxon>
        <taxon>Vertebrata</taxon>
        <taxon>Euteleostomi</taxon>
        <taxon>Mammalia</taxon>
        <taxon>Eutheria</taxon>
        <taxon>Euarchontoglires</taxon>
        <taxon>Glires</taxon>
        <taxon>Rodentia</taxon>
        <taxon>Myomorpha</taxon>
        <taxon>Muroidea</taxon>
        <taxon>Muridae</taxon>
        <taxon>Murinae</taxon>
        <taxon>Mus</taxon>
        <taxon>Mus</taxon>
    </lineage>
</organism>
<keyword id="KW-0002">3D-structure</keyword>
<keyword id="KW-0342">GTP-binding</keyword>
<keyword id="KW-0396">Initiation factor</keyword>
<keyword id="KW-0496">Mitochondrion</keyword>
<keyword id="KW-0547">Nucleotide-binding</keyword>
<keyword id="KW-0597">Phosphoprotein</keyword>
<keyword id="KW-0648">Protein biosynthesis</keyword>
<keyword id="KW-1185">Reference proteome</keyword>
<keyword id="KW-0809">Transit peptide</keyword>
<gene>
    <name type="primary">Mtif2</name>
</gene>
<comment type="function">
    <text evidence="1">One of the essential components for the initiation of protein synthesis. Protects formylmethionyl-tRNA from spontaneous hydrolysis and promotes its binding to the 30S ribosomal subunits. Also involved in the hydrolysis of GTP during the formation of the 70S ribosomal complex (By similarity).</text>
</comment>
<comment type="subunit">
    <text evidence="1">Monomer.</text>
</comment>
<comment type="subcellular location">
    <subcellularLocation>
        <location evidence="1">Mitochondrion</location>
    </subcellularLocation>
</comment>
<comment type="similarity">
    <text evidence="4">Belongs to the TRAFAC class translation factor GTPase superfamily. Classic translation factor GTPase family. IF-2 subfamily.</text>
</comment>
<dbReference type="EMBL" id="AK136344">
    <property type="protein sequence ID" value="BAE22940.1"/>
    <property type="molecule type" value="mRNA"/>
</dbReference>
<dbReference type="EMBL" id="AK146961">
    <property type="protein sequence ID" value="BAE27568.1"/>
    <property type="molecule type" value="mRNA"/>
</dbReference>
<dbReference type="EMBL" id="BX284634">
    <property type="status" value="NOT_ANNOTATED_CDS"/>
    <property type="molecule type" value="Genomic_DNA"/>
</dbReference>
<dbReference type="EMBL" id="BC016590">
    <property type="protein sequence ID" value="AAH16590.1"/>
    <property type="molecule type" value="mRNA"/>
</dbReference>
<dbReference type="CCDS" id="CCDS24496.1"/>
<dbReference type="RefSeq" id="NP_001269047.1">
    <property type="nucleotide sequence ID" value="NM_001282118.1"/>
</dbReference>
<dbReference type="RefSeq" id="NP_001269048.1">
    <property type="nucleotide sequence ID" value="NM_001282119.1"/>
</dbReference>
<dbReference type="RefSeq" id="NP_001269049.1">
    <property type="nucleotide sequence ID" value="NM_001282120.1"/>
</dbReference>
<dbReference type="RefSeq" id="NP_598528.2">
    <property type="nucleotide sequence ID" value="NM_133767.3"/>
</dbReference>
<dbReference type="RefSeq" id="XP_006514954.1">
    <property type="nucleotide sequence ID" value="XM_006514891.3"/>
</dbReference>
<dbReference type="RefSeq" id="XP_006514955.1">
    <property type="nucleotide sequence ID" value="XM_006514892.4"/>
</dbReference>
<dbReference type="PDB" id="2CRV">
    <property type="method" value="NMR"/>
    <property type="chains" value="A=621-727"/>
</dbReference>
<dbReference type="PDBsum" id="2CRV"/>
<dbReference type="SMR" id="Q91YJ5"/>
<dbReference type="BioGRID" id="218311">
    <property type="interactions" value="6"/>
</dbReference>
<dbReference type="FunCoup" id="Q91YJ5">
    <property type="interactions" value="2632"/>
</dbReference>
<dbReference type="IntAct" id="Q91YJ5">
    <property type="interactions" value="1"/>
</dbReference>
<dbReference type="MINT" id="Q91YJ5"/>
<dbReference type="STRING" id="10090.ENSMUSP00000090926"/>
<dbReference type="iPTMnet" id="Q91YJ5"/>
<dbReference type="PhosphoSitePlus" id="Q91YJ5"/>
<dbReference type="SwissPalm" id="Q91YJ5"/>
<dbReference type="jPOST" id="Q91YJ5"/>
<dbReference type="PaxDb" id="10090-ENSMUSP00000090926"/>
<dbReference type="PeptideAtlas" id="Q91YJ5"/>
<dbReference type="ProteomicsDB" id="267094"/>
<dbReference type="Pumba" id="Q91YJ5"/>
<dbReference type="Antibodypedia" id="1037">
    <property type="antibodies" value="82 antibodies from 19 providers"/>
</dbReference>
<dbReference type="DNASU" id="76784"/>
<dbReference type="Ensembl" id="ENSMUST00000020749.13">
    <property type="protein sequence ID" value="ENSMUSP00000020749.7"/>
    <property type="gene ID" value="ENSMUSG00000020459.15"/>
</dbReference>
<dbReference type="Ensembl" id="ENSMUST00000093239.11">
    <property type="protein sequence ID" value="ENSMUSP00000090926.5"/>
    <property type="gene ID" value="ENSMUSG00000020459.15"/>
</dbReference>
<dbReference type="GeneID" id="76784"/>
<dbReference type="KEGG" id="mmu:76784"/>
<dbReference type="UCSC" id="uc007ihc.2">
    <property type="organism name" value="mouse"/>
</dbReference>
<dbReference type="AGR" id="MGI:1924034"/>
<dbReference type="CTD" id="4528"/>
<dbReference type="MGI" id="MGI:1924034">
    <property type="gene designation" value="Mtif2"/>
</dbReference>
<dbReference type="VEuPathDB" id="HostDB:ENSMUSG00000020459"/>
<dbReference type="eggNOG" id="KOG1145">
    <property type="taxonomic scope" value="Eukaryota"/>
</dbReference>
<dbReference type="GeneTree" id="ENSGT00900000141103"/>
<dbReference type="HOGENOM" id="CLU_006301_5_2_1"/>
<dbReference type="InParanoid" id="Q91YJ5"/>
<dbReference type="OMA" id="TIVCYQI"/>
<dbReference type="OrthoDB" id="361630at2759"/>
<dbReference type="PhylomeDB" id="Q91YJ5"/>
<dbReference type="TreeFam" id="TF105682"/>
<dbReference type="BioGRID-ORCS" id="76784">
    <property type="hits" value="23 hits in 81 CRISPR screens"/>
</dbReference>
<dbReference type="ChiTaRS" id="Mtif2">
    <property type="organism name" value="mouse"/>
</dbReference>
<dbReference type="EvolutionaryTrace" id="Q91YJ5"/>
<dbReference type="PRO" id="PR:Q91YJ5"/>
<dbReference type="Proteomes" id="UP000000589">
    <property type="component" value="Chromosome 11"/>
</dbReference>
<dbReference type="RNAct" id="Q91YJ5">
    <property type="molecule type" value="protein"/>
</dbReference>
<dbReference type="Bgee" id="ENSMUSG00000020459">
    <property type="expression patterns" value="Expressed in embryonic post-anal tail and 270 other cell types or tissues"/>
</dbReference>
<dbReference type="ExpressionAtlas" id="Q91YJ5">
    <property type="expression patterns" value="baseline and differential"/>
</dbReference>
<dbReference type="GO" id="GO:0005739">
    <property type="term" value="C:mitochondrion"/>
    <property type="evidence" value="ECO:0007005"/>
    <property type="project" value="MGI"/>
</dbReference>
<dbReference type="GO" id="GO:0005654">
    <property type="term" value="C:nucleoplasm"/>
    <property type="evidence" value="ECO:0007669"/>
    <property type="project" value="Ensembl"/>
</dbReference>
<dbReference type="GO" id="GO:0005525">
    <property type="term" value="F:GTP binding"/>
    <property type="evidence" value="ECO:0007669"/>
    <property type="project" value="UniProtKB-KW"/>
</dbReference>
<dbReference type="GO" id="GO:0003924">
    <property type="term" value="F:GTPase activity"/>
    <property type="evidence" value="ECO:0007669"/>
    <property type="project" value="InterPro"/>
</dbReference>
<dbReference type="GO" id="GO:0043024">
    <property type="term" value="F:ribosomal small subunit binding"/>
    <property type="evidence" value="ECO:0000250"/>
    <property type="project" value="HGNC-UCL"/>
</dbReference>
<dbReference type="GO" id="GO:0008135">
    <property type="term" value="F:translation factor activity, RNA binding"/>
    <property type="evidence" value="ECO:0000250"/>
    <property type="project" value="HGNC-UCL"/>
</dbReference>
<dbReference type="GO" id="GO:0003743">
    <property type="term" value="F:translation initiation factor activity"/>
    <property type="evidence" value="ECO:0007669"/>
    <property type="project" value="UniProtKB-KW"/>
</dbReference>
<dbReference type="GO" id="GO:0070124">
    <property type="term" value="P:mitochondrial translational initiation"/>
    <property type="evidence" value="ECO:0000250"/>
    <property type="project" value="BHF-UCL"/>
</dbReference>
<dbReference type="GO" id="GO:0032790">
    <property type="term" value="P:ribosome disassembly"/>
    <property type="evidence" value="ECO:0000250"/>
    <property type="project" value="BHF-UCL"/>
</dbReference>
<dbReference type="CDD" id="cd01887">
    <property type="entry name" value="IF2_eIF5B"/>
    <property type="match status" value="1"/>
</dbReference>
<dbReference type="CDD" id="cd03702">
    <property type="entry name" value="IF2_mtIF2_II"/>
    <property type="match status" value="1"/>
</dbReference>
<dbReference type="CDD" id="cd03692">
    <property type="entry name" value="mtIF2_IVc"/>
    <property type="match status" value="1"/>
</dbReference>
<dbReference type="FunFam" id="2.40.30.10:FF:000007">
    <property type="entry name" value="Translation initiation factor IF-2"/>
    <property type="match status" value="1"/>
</dbReference>
<dbReference type="FunFam" id="3.40.50.300:FF:000019">
    <property type="entry name" value="Translation initiation factor IF-2"/>
    <property type="match status" value="1"/>
</dbReference>
<dbReference type="FunFam" id="2.40.30.10:FF:000072">
    <property type="entry name" value="translation initiation factor IF-2, mitochondrial isoform X1"/>
    <property type="match status" value="1"/>
</dbReference>
<dbReference type="FunFam" id="3.40.50.10050:FF:000003">
    <property type="entry name" value="translation initiation factor IF-2, mitochondrial isoform X1"/>
    <property type="match status" value="1"/>
</dbReference>
<dbReference type="Gene3D" id="3.40.50.300">
    <property type="entry name" value="P-loop containing nucleotide triphosphate hydrolases"/>
    <property type="match status" value="1"/>
</dbReference>
<dbReference type="Gene3D" id="2.40.30.10">
    <property type="entry name" value="Translation factors"/>
    <property type="match status" value="2"/>
</dbReference>
<dbReference type="Gene3D" id="3.40.50.10050">
    <property type="entry name" value="Translation initiation factor IF- 2, domain 3"/>
    <property type="match status" value="1"/>
</dbReference>
<dbReference type="HAMAP" id="MF_00100_B">
    <property type="entry name" value="IF_2_B"/>
    <property type="match status" value="1"/>
</dbReference>
<dbReference type="InterPro" id="IPR053905">
    <property type="entry name" value="EF-G-like_DII"/>
</dbReference>
<dbReference type="InterPro" id="IPR044145">
    <property type="entry name" value="IF2_II"/>
</dbReference>
<dbReference type="InterPro" id="IPR027417">
    <property type="entry name" value="P-loop_NTPase"/>
</dbReference>
<dbReference type="InterPro" id="IPR005225">
    <property type="entry name" value="Small_GTP-bd"/>
</dbReference>
<dbReference type="InterPro" id="IPR000795">
    <property type="entry name" value="T_Tr_GTP-bd_dom"/>
</dbReference>
<dbReference type="InterPro" id="IPR000178">
    <property type="entry name" value="TF_IF2_bacterial-like"/>
</dbReference>
<dbReference type="InterPro" id="IPR015760">
    <property type="entry name" value="TIF_IF2"/>
</dbReference>
<dbReference type="InterPro" id="IPR023115">
    <property type="entry name" value="TIF_IF2_dom3"/>
</dbReference>
<dbReference type="InterPro" id="IPR036925">
    <property type="entry name" value="TIF_IF2_dom3_sf"/>
</dbReference>
<dbReference type="InterPro" id="IPR009000">
    <property type="entry name" value="Transl_B-barrel_sf"/>
</dbReference>
<dbReference type="NCBIfam" id="TIGR00231">
    <property type="entry name" value="small_GTP"/>
    <property type="match status" value="1"/>
</dbReference>
<dbReference type="PANTHER" id="PTHR43381:SF20">
    <property type="entry name" value="TRANSLATION INITIATION FACTOR IF-2, MITOCHONDRIAL"/>
    <property type="match status" value="1"/>
</dbReference>
<dbReference type="PANTHER" id="PTHR43381">
    <property type="entry name" value="TRANSLATION INITIATION FACTOR IF-2-RELATED"/>
    <property type="match status" value="1"/>
</dbReference>
<dbReference type="Pfam" id="PF22042">
    <property type="entry name" value="EF-G_D2"/>
    <property type="match status" value="1"/>
</dbReference>
<dbReference type="Pfam" id="PF00009">
    <property type="entry name" value="GTP_EFTU"/>
    <property type="match status" value="1"/>
</dbReference>
<dbReference type="Pfam" id="PF11987">
    <property type="entry name" value="IF-2"/>
    <property type="match status" value="1"/>
</dbReference>
<dbReference type="SUPFAM" id="SSF52156">
    <property type="entry name" value="Initiation factor IF2/eIF5b, domain 3"/>
    <property type="match status" value="1"/>
</dbReference>
<dbReference type="SUPFAM" id="SSF52540">
    <property type="entry name" value="P-loop containing nucleoside triphosphate hydrolases"/>
    <property type="match status" value="1"/>
</dbReference>
<dbReference type="SUPFAM" id="SSF50447">
    <property type="entry name" value="Translation proteins"/>
    <property type="match status" value="2"/>
</dbReference>
<dbReference type="PROSITE" id="PS51722">
    <property type="entry name" value="G_TR_2"/>
    <property type="match status" value="1"/>
</dbReference>
<dbReference type="PROSITE" id="PS01176">
    <property type="entry name" value="IF2"/>
    <property type="match status" value="1"/>
</dbReference>
<name>IF2M_MOUSE</name>
<proteinExistence type="evidence at protein level"/>